<accession>Q3IZ05</accession>
<name>TRMD_CERS4</name>
<keyword id="KW-0963">Cytoplasm</keyword>
<keyword id="KW-0489">Methyltransferase</keyword>
<keyword id="KW-1185">Reference proteome</keyword>
<keyword id="KW-0949">S-adenosyl-L-methionine</keyword>
<keyword id="KW-0808">Transferase</keyword>
<keyword id="KW-0819">tRNA processing</keyword>
<gene>
    <name evidence="1" type="primary">trmD</name>
    <name type="ordered locus">RHOS4_26610</name>
    <name type="ORF">RSP_1045</name>
</gene>
<reference key="1">
    <citation type="submission" date="2005-09" db="EMBL/GenBank/DDBJ databases">
        <title>Complete sequence of chromosome 1 of Rhodobacter sphaeroides 2.4.1.</title>
        <authorList>
            <person name="Copeland A."/>
            <person name="Lucas S."/>
            <person name="Lapidus A."/>
            <person name="Barry K."/>
            <person name="Detter J.C."/>
            <person name="Glavina T."/>
            <person name="Hammon N."/>
            <person name="Israni S."/>
            <person name="Pitluck S."/>
            <person name="Richardson P."/>
            <person name="Mackenzie C."/>
            <person name="Choudhary M."/>
            <person name="Larimer F."/>
            <person name="Hauser L.J."/>
            <person name="Land M."/>
            <person name="Donohue T.J."/>
            <person name="Kaplan S."/>
        </authorList>
    </citation>
    <scope>NUCLEOTIDE SEQUENCE [LARGE SCALE GENOMIC DNA]</scope>
    <source>
        <strain>ATCC 17023 / DSM 158 / JCM 6121 / CCUG 31486 / LMG 2827 / NBRC 12203 / NCIMB 8253 / ATH 2.4.1.</strain>
    </source>
</reference>
<proteinExistence type="inferred from homology"/>
<dbReference type="EC" id="2.1.1.228" evidence="1"/>
<dbReference type="EMBL" id="CP000143">
    <property type="protein sequence ID" value="ABA80229.1"/>
    <property type="status" value="ALT_INIT"/>
    <property type="molecule type" value="Genomic_DNA"/>
</dbReference>
<dbReference type="RefSeq" id="YP_354130.1">
    <property type="nucleotide sequence ID" value="NC_007493.2"/>
</dbReference>
<dbReference type="SMR" id="Q3IZ05"/>
<dbReference type="STRING" id="272943.RSP_1045"/>
<dbReference type="EnsemblBacteria" id="ABA80229">
    <property type="protein sequence ID" value="ABA80229"/>
    <property type="gene ID" value="RSP_1045"/>
</dbReference>
<dbReference type="KEGG" id="rsp:RSP_1045"/>
<dbReference type="PATRIC" id="fig|272943.9.peg.3019"/>
<dbReference type="eggNOG" id="COG0336">
    <property type="taxonomic scope" value="Bacteria"/>
</dbReference>
<dbReference type="OrthoDB" id="9807416at2"/>
<dbReference type="Proteomes" id="UP000002703">
    <property type="component" value="Chromosome 1"/>
</dbReference>
<dbReference type="GO" id="GO:0005829">
    <property type="term" value="C:cytosol"/>
    <property type="evidence" value="ECO:0007669"/>
    <property type="project" value="TreeGrafter"/>
</dbReference>
<dbReference type="GO" id="GO:0052906">
    <property type="term" value="F:tRNA (guanine(37)-N1)-methyltransferase activity"/>
    <property type="evidence" value="ECO:0007669"/>
    <property type="project" value="UniProtKB-UniRule"/>
</dbReference>
<dbReference type="GO" id="GO:0002939">
    <property type="term" value="P:tRNA N1-guanine methylation"/>
    <property type="evidence" value="ECO:0007669"/>
    <property type="project" value="TreeGrafter"/>
</dbReference>
<dbReference type="CDD" id="cd18080">
    <property type="entry name" value="TrmD-like"/>
    <property type="match status" value="1"/>
</dbReference>
<dbReference type="Gene3D" id="3.40.1280.10">
    <property type="match status" value="1"/>
</dbReference>
<dbReference type="Gene3D" id="1.10.1270.20">
    <property type="entry name" value="tRNA(m1g37)methyltransferase, domain 2"/>
    <property type="match status" value="1"/>
</dbReference>
<dbReference type="HAMAP" id="MF_00605">
    <property type="entry name" value="TrmD"/>
    <property type="match status" value="1"/>
</dbReference>
<dbReference type="InterPro" id="IPR029028">
    <property type="entry name" value="Alpha/beta_knot_MTases"/>
</dbReference>
<dbReference type="InterPro" id="IPR023148">
    <property type="entry name" value="tRNA_m1G_MeTrfase_C_sf"/>
</dbReference>
<dbReference type="InterPro" id="IPR002649">
    <property type="entry name" value="tRNA_m1G_MeTrfase_TrmD"/>
</dbReference>
<dbReference type="InterPro" id="IPR029026">
    <property type="entry name" value="tRNA_m1G_MTases_N"/>
</dbReference>
<dbReference type="InterPro" id="IPR016009">
    <property type="entry name" value="tRNA_MeTrfase_TRMD/TRM10"/>
</dbReference>
<dbReference type="NCBIfam" id="NF000648">
    <property type="entry name" value="PRK00026.1"/>
    <property type="match status" value="1"/>
</dbReference>
<dbReference type="NCBIfam" id="TIGR00088">
    <property type="entry name" value="trmD"/>
    <property type="match status" value="1"/>
</dbReference>
<dbReference type="PANTHER" id="PTHR46417">
    <property type="entry name" value="TRNA (GUANINE-N(1)-)-METHYLTRANSFERASE"/>
    <property type="match status" value="1"/>
</dbReference>
<dbReference type="PANTHER" id="PTHR46417:SF1">
    <property type="entry name" value="TRNA (GUANINE-N(1)-)-METHYLTRANSFERASE"/>
    <property type="match status" value="1"/>
</dbReference>
<dbReference type="Pfam" id="PF01746">
    <property type="entry name" value="tRNA_m1G_MT"/>
    <property type="match status" value="1"/>
</dbReference>
<dbReference type="PIRSF" id="PIRSF000386">
    <property type="entry name" value="tRNA_mtase"/>
    <property type="match status" value="1"/>
</dbReference>
<dbReference type="SUPFAM" id="SSF75217">
    <property type="entry name" value="alpha/beta knot"/>
    <property type="match status" value="1"/>
</dbReference>
<organism>
    <name type="scientific">Cereibacter sphaeroides (strain ATCC 17023 / DSM 158 / JCM 6121 / CCUG 31486 / LMG 2827 / NBRC 12203 / NCIMB 8253 / ATH 2.4.1.)</name>
    <name type="common">Rhodobacter sphaeroides</name>
    <dbReference type="NCBI Taxonomy" id="272943"/>
    <lineage>
        <taxon>Bacteria</taxon>
        <taxon>Pseudomonadati</taxon>
        <taxon>Pseudomonadota</taxon>
        <taxon>Alphaproteobacteria</taxon>
        <taxon>Rhodobacterales</taxon>
        <taxon>Paracoccaceae</taxon>
        <taxon>Cereibacter</taxon>
    </lineage>
</organism>
<protein>
    <recommendedName>
        <fullName evidence="1">tRNA (guanine-N(1)-)-methyltransferase</fullName>
        <ecNumber evidence="1">2.1.1.228</ecNumber>
    </recommendedName>
    <alternativeName>
        <fullName evidence="1">M1G-methyltransferase</fullName>
    </alternativeName>
    <alternativeName>
        <fullName evidence="1">tRNA [GM37] methyltransferase</fullName>
    </alternativeName>
</protein>
<sequence>MLKGAWQARIVTLFPEAFPGTLGLSLTGKALEMGLWSLETIDLRPFGEGRHRNVDDNPAGGGAGMVLRADIVARALDAASVGTPPERSRWPVVYLSPRGKPFSQAMARDWAGAEGLTLLCGRFEGVDQRVLDAYAVEEVSLGDFVLTGGEIAAQALIDATVRLIPRVLGNHASTEEESFSEGLLEFPQYTRPTVWQDRTIPEVLLSGHHANIARWRRAEAERLTKERRPDLWRAYCAARGRDPDEDREL</sequence>
<evidence type="ECO:0000255" key="1">
    <source>
        <dbReference type="HAMAP-Rule" id="MF_00605"/>
    </source>
</evidence>
<evidence type="ECO:0000305" key="2"/>
<comment type="function">
    <text evidence="1">Specifically methylates guanosine-37 in various tRNAs.</text>
</comment>
<comment type="catalytic activity">
    <reaction evidence="1">
        <text>guanosine(37) in tRNA + S-adenosyl-L-methionine = N(1)-methylguanosine(37) in tRNA + S-adenosyl-L-homocysteine + H(+)</text>
        <dbReference type="Rhea" id="RHEA:36899"/>
        <dbReference type="Rhea" id="RHEA-COMP:10145"/>
        <dbReference type="Rhea" id="RHEA-COMP:10147"/>
        <dbReference type="ChEBI" id="CHEBI:15378"/>
        <dbReference type="ChEBI" id="CHEBI:57856"/>
        <dbReference type="ChEBI" id="CHEBI:59789"/>
        <dbReference type="ChEBI" id="CHEBI:73542"/>
        <dbReference type="ChEBI" id="CHEBI:74269"/>
        <dbReference type="EC" id="2.1.1.228"/>
    </reaction>
</comment>
<comment type="subunit">
    <text evidence="1">Homodimer.</text>
</comment>
<comment type="subcellular location">
    <subcellularLocation>
        <location evidence="1">Cytoplasm</location>
    </subcellularLocation>
</comment>
<comment type="similarity">
    <text evidence="1">Belongs to the RNA methyltransferase TrmD family.</text>
</comment>
<comment type="sequence caution" evidence="2">
    <conflict type="erroneous initiation">
        <sequence resource="EMBL-CDS" id="ABA80229"/>
    </conflict>
</comment>
<feature type="chain" id="PRO_0000257457" description="tRNA (guanine-N(1)-)-methyltransferase">
    <location>
        <begin position="1"/>
        <end position="249"/>
    </location>
</feature>
<feature type="binding site" evidence="1">
    <location>
        <position position="121"/>
    </location>
    <ligand>
        <name>S-adenosyl-L-methionine</name>
        <dbReference type="ChEBI" id="CHEBI:59789"/>
    </ligand>
</feature>
<feature type="binding site" evidence="1">
    <location>
        <begin position="141"/>
        <end position="146"/>
    </location>
    <ligand>
        <name>S-adenosyl-L-methionine</name>
        <dbReference type="ChEBI" id="CHEBI:59789"/>
    </ligand>
</feature>